<protein>
    <recommendedName>
        <fullName evidence="1">Sugar fermentation stimulation protein homolog</fullName>
    </recommendedName>
</protein>
<reference key="1">
    <citation type="submission" date="2007-04" db="EMBL/GenBank/DDBJ databases">
        <title>Complete sequence of Pseudomonas mendocina ymp.</title>
        <authorList>
            <consortium name="US DOE Joint Genome Institute"/>
            <person name="Copeland A."/>
            <person name="Lucas S."/>
            <person name="Lapidus A."/>
            <person name="Barry K."/>
            <person name="Glavina del Rio T."/>
            <person name="Dalin E."/>
            <person name="Tice H."/>
            <person name="Pitluck S."/>
            <person name="Kiss H."/>
            <person name="Brettin T."/>
            <person name="Detter J.C."/>
            <person name="Bruce D."/>
            <person name="Han C."/>
            <person name="Schmutz J."/>
            <person name="Larimer F."/>
            <person name="Land M."/>
            <person name="Hauser L."/>
            <person name="Kyrpides N."/>
            <person name="Mikhailova N."/>
            <person name="Hersman L."/>
            <person name="Dubois J."/>
            <person name="Maurice P."/>
            <person name="Richardson P."/>
        </authorList>
    </citation>
    <scope>NUCLEOTIDE SEQUENCE [LARGE SCALE GENOMIC DNA]</scope>
    <source>
        <strain>ymp</strain>
    </source>
</reference>
<accession>A4XYB5</accession>
<name>SFSA_ECTM1</name>
<evidence type="ECO:0000255" key="1">
    <source>
        <dbReference type="HAMAP-Rule" id="MF_00095"/>
    </source>
</evidence>
<dbReference type="EMBL" id="CP000680">
    <property type="protein sequence ID" value="ABP86331.1"/>
    <property type="molecule type" value="Genomic_DNA"/>
</dbReference>
<dbReference type="SMR" id="A4XYB5"/>
<dbReference type="STRING" id="399739.Pmen_3583"/>
<dbReference type="KEGG" id="pmy:Pmen_3583"/>
<dbReference type="PATRIC" id="fig|399739.8.peg.3631"/>
<dbReference type="eggNOG" id="COG1489">
    <property type="taxonomic scope" value="Bacteria"/>
</dbReference>
<dbReference type="HOGENOM" id="CLU_052299_2_0_6"/>
<dbReference type="OrthoDB" id="9802365at2"/>
<dbReference type="GO" id="GO:0003677">
    <property type="term" value="F:DNA binding"/>
    <property type="evidence" value="ECO:0007669"/>
    <property type="project" value="InterPro"/>
</dbReference>
<dbReference type="CDD" id="cd22359">
    <property type="entry name" value="SfsA-like_bacterial"/>
    <property type="match status" value="1"/>
</dbReference>
<dbReference type="FunFam" id="2.40.50.580:FF:000001">
    <property type="entry name" value="Sugar fermentation stimulation protein A"/>
    <property type="match status" value="1"/>
</dbReference>
<dbReference type="Gene3D" id="2.40.50.580">
    <property type="match status" value="1"/>
</dbReference>
<dbReference type="Gene3D" id="3.40.1350.60">
    <property type="match status" value="1"/>
</dbReference>
<dbReference type="HAMAP" id="MF_00095">
    <property type="entry name" value="SfsA"/>
    <property type="match status" value="1"/>
</dbReference>
<dbReference type="InterPro" id="IPR005224">
    <property type="entry name" value="SfsA"/>
</dbReference>
<dbReference type="InterPro" id="IPR040452">
    <property type="entry name" value="SfsA_C"/>
</dbReference>
<dbReference type="InterPro" id="IPR041465">
    <property type="entry name" value="SfsA_N"/>
</dbReference>
<dbReference type="NCBIfam" id="TIGR00230">
    <property type="entry name" value="sfsA"/>
    <property type="match status" value="1"/>
</dbReference>
<dbReference type="PANTHER" id="PTHR30545">
    <property type="entry name" value="SUGAR FERMENTATION STIMULATION PROTEIN A"/>
    <property type="match status" value="1"/>
</dbReference>
<dbReference type="PANTHER" id="PTHR30545:SF2">
    <property type="entry name" value="SUGAR FERMENTATION STIMULATION PROTEIN A"/>
    <property type="match status" value="1"/>
</dbReference>
<dbReference type="Pfam" id="PF03749">
    <property type="entry name" value="SfsA"/>
    <property type="match status" value="1"/>
</dbReference>
<dbReference type="Pfam" id="PF17746">
    <property type="entry name" value="SfsA_N"/>
    <property type="match status" value="1"/>
</dbReference>
<gene>
    <name evidence="1" type="primary">sfsA</name>
    <name type="ordered locus">Pmen_3583</name>
</gene>
<proteinExistence type="inferred from homology"/>
<sequence length="235" mass="25611">MRFDPPLEEGRLLRRYKRFLADIETASGEPMTIHCANTGSMLNCMSEGCRVWFSRSNDPKRKLPGSWEISETPQGRLACINTARANALVEEALRAGLIAELAGFTALKREVPYGVENSRADFRLDYPSGPVFVEVKSVTLGFDDSDVAAFPDAVTLRGARHLRELAALSRLGVRTVLLYCVNLSGIVAVRAAEDIDPAYAAGLREARAAGVEVLAYGAELSPEGISLVRRLDVLT</sequence>
<comment type="similarity">
    <text evidence="1">Belongs to the SfsA family.</text>
</comment>
<organism>
    <name type="scientific">Ectopseudomonas mendocina (strain ymp)</name>
    <name type="common">Pseudomonas mendocina</name>
    <dbReference type="NCBI Taxonomy" id="399739"/>
    <lineage>
        <taxon>Bacteria</taxon>
        <taxon>Pseudomonadati</taxon>
        <taxon>Pseudomonadota</taxon>
        <taxon>Gammaproteobacteria</taxon>
        <taxon>Pseudomonadales</taxon>
        <taxon>Pseudomonadaceae</taxon>
        <taxon>Ectopseudomonas</taxon>
    </lineage>
</organism>
<feature type="chain" id="PRO_1000008013" description="Sugar fermentation stimulation protein homolog">
    <location>
        <begin position="1"/>
        <end position="235"/>
    </location>
</feature>